<evidence type="ECO:0000255" key="1"/>
<feature type="chain" id="PRO_0000066525" description="Uncharacterized 11.0 kDa protein in thcB-thcC intergenic region">
    <location>
        <begin position="1"/>
        <end position="103"/>
    </location>
</feature>
<feature type="domain" description="EthD" evidence="1">
    <location>
        <begin position="12"/>
        <end position="88"/>
    </location>
</feature>
<name>YTH4_RHOER</name>
<proteinExistence type="predicted"/>
<reference key="1">
    <citation type="journal article" date="1995" name="J. Bacteriol.">
        <title>Degradation of the thiocarbamate herbicide EPTC (S-ethyl dipropylcarbamothioate) and biosafening by Rhodococcus sp. strain NI86/21 involve an inducible cytochrome P-450 system and aldehyde dehydrogenase.</title>
        <authorList>
            <person name="Nagy I."/>
            <person name="Schoofs G."/>
            <person name="Compernolle F."/>
            <person name="Proost P."/>
            <person name="Vanderleyden J."/>
            <person name="de Mot R."/>
        </authorList>
    </citation>
    <scope>NUCLEOTIDE SEQUENCE [GENOMIC DNA]</scope>
    <source>
        <strain>NI86/21</strain>
    </source>
</reference>
<dbReference type="EMBL" id="U17130">
    <property type="protein sequence ID" value="AAC45750.1"/>
    <property type="molecule type" value="Genomic_DNA"/>
</dbReference>
<dbReference type="RefSeq" id="WP_219458687.1">
    <property type="nucleotide sequence ID" value="NZ_JABBPH010000001.1"/>
</dbReference>
<dbReference type="SMR" id="P43491"/>
<dbReference type="GO" id="GO:0016491">
    <property type="term" value="F:oxidoreductase activity"/>
    <property type="evidence" value="ECO:0007669"/>
    <property type="project" value="InterPro"/>
</dbReference>
<dbReference type="Gene3D" id="3.30.70.100">
    <property type="match status" value="1"/>
</dbReference>
<dbReference type="InterPro" id="IPR011008">
    <property type="entry name" value="Dimeric_a/b-barrel"/>
</dbReference>
<dbReference type="InterPro" id="IPR009799">
    <property type="entry name" value="EthD_dom"/>
</dbReference>
<dbReference type="NCBIfam" id="TIGR02118">
    <property type="entry name" value="EthD family reductase"/>
    <property type="match status" value="1"/>
</dbReference>
<dbReference type="PANTHER" id="PTHR40260">
    <property type="entry name" value="BLR8190 PROTEIN"/>
    <property type="match status" value="1"/>
</dbReference>
<dbReference type="PANTHER" id="PTHR40260:SF2">
    <property type="entry name" value="BLR8190 PROTEIN"/>
    <property type="match status" value="1"/>
</dbReference>
<dbReference type="Pfam" id="PF07110">
    <property type="entry name" value="EthD"/>
    <property type="match status" value="1"/>
</dbReference>
<dbReference type="SUPFAM" id="SSF54909">
    <property type="entry name" value="Dimeric alpha+beta barrel"/>
    <property type="match status" value="1"/>
</dbReference>
<protein>
    <recommendedName>
        <fullName>Uncharacterized 11.0 kDa protein in thcB-thcC intergenic region</fullName>
    </recommendedName>
    <alternativeName>
        <fullName>ORF4</fullName>
    </alternativeName>
</protein>
<organism>
    <name type="scientific">Rhodococcus erythropolis</name>
    <name type="common">Arthrobacter picolinophilus</name>
    <dbReference type="NCBI Taxonomy" id="1833"/>
    <lineage>
        <taxon>Bacteria</taxon>
        <taxon>Bacillati</taxon>
        <taxon>Actinomycetota</taxon>
        <taxon>Actinomycetes</taxon>
        <taxon>Mycobacteriales</taxon>
        <taxon>Nocardiaceae</taxon>
        <taxon>Rhodococcus</taxon>
        <taxon>Rhodococcus erythropolis group</taxon>
    </lineage>
</organism>
<sequence length="103" mass="11008">MYRVTIVYNHPADPAAFDEHYSSKHVPLVQQIPSVKRFAAGKCDSLDGNPPSAYALAQLYFESKAEAGQAFASPEGQNAAADVANFASGGVTMLFTDEETVLP</sequence>
<accession>P43491</accession>